<gene>
    <name evidence="1" type="primary">lspA</name>
    <name type="ordered locus">Pcar_2454</name>
</gene>
<reference key="1">
    <citation type="submission" date="2005-10" db="EMBL/GenBank/DDBJ databases">
        <title>Complete sequence of Pelobacter carbinolicus DSM 2380.</title>
        <authorList>
            <person name="Copeland A."/>
            <person name="Lucas S."/>
            <person name="Lapidus A."/>
            <person name="Barry K."/>
            <person name="Detter J.C."/>
            <person name="Glavina T."/>
            <person name="Hammon N."/>
            <person name="Israni S."/>
            <person name="Pitluck S."/>
            <person name="Chertkov O."/>
            <person name="Schmutz J."/>
            <person name="Larimer F."/>
            <person name="Land M."/>
            <person name="Kyrpides N."/>
            <person name="Ivanova N."/>
            <person name="Richardson P."/>
        </authorList>
    </citation>
    <scope>NUCLEOTIDE SEQUENCE [LARGE SCALE GENOMIC DNA]</scope>
    <source>
        <strain>DSM 2380 / NBRC 103641 / GraBd1</strain>
    </source>
</reference>
<name>LSPA_SYNC1</name>
<dbReference type="EC" id="3.4.23.36" evidence="1"/>
<dbReference type="EMBL" id="CP000142">
    <property type="protein sequence ID" value="ABA89693.1"/>
    <property type="molecule type" value="Genomic_DNA"/>
</dbReference>
<dbReference type="RefSeq" id="WP_011342219.1">
    <property type="nucleotide sequence ID" value="NC_007498.2"/>
</dbReference>
<dbReference type="SMR" id="Q3A1R4"/>
<dbReference type="STRING" id="338963.Pcar_2454"/>
<dbReference type="KEGG" id="pca:Pcar_2454"/>
<dbReference type="eggNOG" id="COG0597">
    <property type="taxonomic scope" value="Bacteria"/>
</dbReference>
<dbReference type="HOGENOM" id="CLU_083252_4_0_7"/>
<dbReference type="OrthoDB" id="9810259at2"/>
<dbReference type="UniPathway" id="UPA00665"/>
<dbReference type="Proteomes" id="UP000002534">
    <property type="component" value="Chromosome"/>
</dbReference>
<dbReference type="GO" id="GO:0005886">
    <property type="term" value="C:plasma membrane"/>
    <property type="evidence" value="ECO:0007669"/>
    <property type="project" value="UniProtKB-SubCell"/>
</dbReference>
<dbReference type="GO" id="GO:0004190">
    <property type="term" value="F:aspartic-type endopeptidase activity"/>
    <property type="evidence" value="ECO:0007669"/>
    <property type="project" value="UniProtKB-UniRule"/>
</dbReference>
<dbReference type="GO" id="GO:0006508">
    <property type="term" value="P:proteolysis"/>
    <property type="evidence" value="ECO:0007669"/>
    <property type="project" value="UniProtKB-KW"/>
</dbReference>
<dbReference type="HAMAP" id="MF_00161">
    <property type="entry name" value="LspA"/>
    <property type="match status" value="1"/>
</dbReference>
<dbReference type="InterPro" id="IPR001872">
    <property type="entry name" value="Peptidase_A8"/>
</dbReference>
<dbReference type="NCBIfam" id="TIGR00077">
    <property type="entry name" value="lspA"/>
    <property type="match status" value="1"/>
</dbReference>
<dbReference type="PANTHER" id="PTHR33695">
    <property type="entry name" value="LIPOPROTEIN SIGNAL PEPTIDASE"/>
    <property type="match status" value="1"/>
</dbReference>
<dbReference type="PANTHER" id="PTHR33695:SF1">
    <property type="entry name" value="LIPOPROTEIN SIGNAL PEPTIDASE"/>
    <property type="match status" value="1"/>
</dbReference>
<dbReference type="Pfam" id="PF01252">
    <property type="entry name" value="Peptidase_A8"/>
    <property type="match status" value="1"/>
</dbReference>
<dbReference type="PRINTS" id="PR00781">
    <property type="entry name" value="LIPOSIGPTASE"/>
</dbReference>
<dbReference type="PROSITE" id="PS00855">
    <property type="entry name" value="SPASE_II"/>
    <property type="match status" value="1"/>
</dbReference>
<sequence>MKLAQFRILLLIATLVVAVDQLTKGLIVRCLKLHEALPVVPNFFDLVYVRNKGAAFGILANTEYRVPFFIITTSVAVVFLAWFYRQYRPDQVLGRCAVSLVLGGAIGNLIDRVRFGEVVDFLDVHWYQYHWPAFNVADSAICVGVGMLLLAQWRDGIRHQA</sequence>
<protein>
    <recommendedName>
        <fullName evidence="1">Lipoprotein signal peptidase</fullName>
        <ecNumber evidence="1">3.4.23.36</ecNumber>
    </recommendedName>
    <alternativeName>
        <fullName evidence="1">Prolipoprotein signal peptidase</fullName>
    </alternativeName>
    <alternativeName>
        <fullName evidence="1">Signal peptidase II</fullName>
        <shortName evidence="1">SPase II</shortName>
    </alternativeName>
</protein>
<feature type="chain" id="PRO_1000038810" description="Lipoprotein signal peptidase">
    <location>
        <begin position="1"/>
        <end position="161"/>
    </location>
</feature>
<feature type="transmembrane region" description="Helical" evidence="1">
    <location>
        <begin position="64"/>
        <end position="84"/>
    </location>
</feature>
<feature type="transmembrane region" description="Helical" evidence="1">
    <location>
        <begin position="92"/>
        <end position="114"/>
    </location>
</feature>
<feature type="transmembrane region" description="Helical" evidence="1">
    <location>
        <begin position="131"/>
        <end position="151"/>
    </location>
</feature>
<feature type="active site" evidence="1">
    <location>
        <position position="120"/>
    </location>
</feature>
<feature type="active site" evidence="1">
    <location>
        <position position="138"/>
    </location>
</feature>
<organism>
    <name type="scientific">Syntrophotalea carbinolica (strain DSM 2380 / NBRC 103641 / GraBd1)</name>
    <name type="common">Pelobacter carbinolicus</name>
    <dbReference type="NCBI Taxonomy" id="338963"/>
    <lineage>
        <taxon>Bacteria</taxon>
        <taxon>Pseudomonadati</taxon>
        <taxon>Thermodesulfobacteriota</taxon>
        <taxon>Desulfuromonadia</taxon>
        <taxon>Desulfuromonadales</taxon>
        <taxon>Syntrophotaleaceae</taxon>
        <taxon>Syntrophotalea</taxon>
    </lineage>
</organism>
<comment type="function">
    <text evidence="1">This protein specifically catalyzes the removal of signal peptides from prolipoproteins.</text>
</comment>
<comment type="catalytic activity">
    <reaction evidence="1">
        <text>Release of signal peptides from bacterial membrane prolipoproteins. Hydrolyzes -Xaa-Yaa-Zaa-|-(S,diacylglyceryl)Cys-, in which Xaa is hydrophobic (preferably Leu), and Yaa (Ala or Ser) and Zaa (Gly or Ala) have small, neutral side chains.</text>
        <dbReference type="EC" id="3.4.23.36"/>
    </reaction>
</comment>
<comment type="pathway">
    <text evidence="1">Protein modification; lipoprotein biosynthesis (signal peptide cleavage).</text>
</comment>
<comment type="subcellular location">
    <subcellularLocation>
        <location evidence="1">Cell inner membrane</location>
        <topology evidence="1">Multi-pass membrane protein</topology>
    </subcellularLocation>
</comment>
<comment type="similarity">
    <text evidence="1">Belongs to the peptidase A8 family.</text>
</comment>
<accession>Q3A1R4</accession>
<proteinExistence type="inferred from homology"/>
<keyword id="KW-0064">Aspartyl protease</keyword>
<keyword id="KW-0997">Cell inner membrane</keyword>
<keyword id="KW-1003">Cell membrane</keyword>
<keyword id="KW-0378">Hydrolase</keyword>
<keyword id="KW-0472">Membrane</keyword>
<keyword id="KW-0645">Protease</keyword>
<keyword id="KW-1185">Reference proteome</keyword>
<keyword id="KW-0812">Transmembrane</keyword>
<keyword id="KW-1133">Transmembrane helix</keyword>
<evidence type="ECO:0000255" key="1">
    <source>
        <dbReference type="HAMAP-Rule" id="MF_00161"/>
    </source>
</evidence>